<keyword id="KW-0028">Amino-acid biosynthesis</keyword>
<keyword id="KW-0368">Histidine biosynthesis</keyword>
<keyword id="KW-0479">Metal-binding</keyword>
<keyword id="KW-0520">NAD</keyword>
<keyword id="KW-0560">Oxidoreductase</keyword>
<keyword id="KW-1185">Reference proteome</keyword>
<keyword id="KW-0862">Zinc</keyword>
<sequence>MRIEDLRKEDWKLNERLEYLAKRGEILEEEYEKSVKEILKRVREEGDRAVIEFTKKFDGVELTPENMEVPFEELEKAYEEIEPEVREALEFAENRIRVFHEKQLENSFFKEEEGIILGQKVVPLEKVGVYVPGGKAAYPSTVLMNVVPASVAGVEEIIMVSPKPNKYTLAAAYIAGVSRVFQVGGAQAIGALAYGTEKIPKVDKIVGPGNIYVALAKKLVFGTVDIDMIAGPSEVLVIADERANPTWVAADMLSQAEHDELAASILLTPSEELANKVKEEVERLLSQLERKEIAQKSLEKFGTIFLVKDLYHACEVANYIAPEHLEVMVREPMALLPELKHAGAIFLGDYTTEPLGDYVLGPNHTLPTGGSTRFFSPLGVYDFIKRSSVLYVSREGFKRVANQAEAIAKAEGLTAHALAVKVRKND</sequence>
<reference key="1">
    <citation type="journal article" date="1998" name="Nature">
        <title>The complete genome of the hyperthermophilic bacterium Aquifex aeolicus.</title>
        <authorList>
            <person name="Deckert G."/>
            <person name="Warren P.V."/>
            <person name="Gaasterland T."/>
            <person name="Young W.G."/>
            <person name="Lenox A.L."/>
            <person name="Graham D.E."/>
            <person name="Overbeek R."/>
            <person name="Snead M.A."/>
            <person name="Keller M."/>
            <person name="Aujay M."/>
            <person name="Huber R."/>
            <person name="Feldman R.A."/>
            <person name="Short J.M."/>
            <person name="Olsen G.J."/>
            <person name="Swanson R.V."/>
        </authorList>
    </citation>
    <scope>NUCLEOTIDE SEQUENCE [LARGE SCALE GENOMIC DNA]</scope>
    <source>
        <strain>VF5</strain>
    </source>
</reference>
<organism>
    <name type="scientific">Aquifex aeolicus (strain VF5)</name>
    <dbReference type="NCBI Taxonomy" id="224324"/>
    <lineage>
        <taxon>Bacteria</taxon>
        <taxon>Pseudomonadati</taxon>
        <taxon>Aquificota</taxon>
        <taxon>Aquificia</taxon>
        <taxon>Aquificales</taxon>
        <taxon>Aquificaceae</taxon>
        <taxon>Aquifex</taxon>
    </lineage>
</organism>
<proteinExistence type="inferred from homology"/>
<gene>
    <name type="primary">hisD</name>
    <name type="ordered locus">aq_782</name>
</gene>
<name>HISX_AQUAE</name>
<evidence type="ECO:0000250" key="1"/>
<evidence type="ECO:0000305" key="2"/>
<feature type="chain" id="PRO_0000135717" description="Histidinol dehydrogenase">
    <location>
        <begin position="1"/>
        <end position="426"/>
    </location>
</feature>
<feature type="active site" description="Proton acceptor" evidence="1">
    <location>
        <position position="323"/>
    </location>
</feature>
<feature type="active site" description="Proton acceptor" evidence="1">
    <location>
        <position position="324"/>
    </location>
</feature>
<feature type="binding site" evidence="1">
    <location>
        <position position="130"/>
    </location>
    <ligand>
        <name>NAD(+)</name>
        <dbReference type="ChEBI" id="CHEBI:57540"/>
    </ligand>
</feature>
<feature type="binding site" evidence="1">
    <location>
        <position position="187"/>
    </location>
    <ligand>
        <name>NAD(+)</name>
        <dbReference type="ChEBI" id="CHEBI:57540"/>
    </ligand>
</feature>
<feature type="binding site" evidence="1">
    <location>
        <position position="210"/>
    </location>
    <ligand>
        <name>NAD(+)</name>
        <dbReference type="ChEBI" id="CHEBI:57540"/>
    </ligand>
</feature>
<feature type="binding site" evidence="1">
    <location>
        <position position="233"/>
    </location>
    <ligand>
        <name>substrate</name>
    </ligand>
</feature>
<feature type="binding site" evidence="1">
    <location>
        <position position="255"/>
    </location>
    <ligand>
        <name>substrate</name>
    </ligand>
</feature>
<feature type="binding site" evidence="1">
    <location>
        <position position="255"/>
    </location>
    <ligand>
        <name>Zn(2+)</name>
        <dbReference type="ChEBI" id="CHEBI:29105"/>
    </ligand>
</feature>
<feature type="binding site" evidence="1">
    <location>
        <position position="258"/>
    </location>
    <ligand>
        <name>substrate</name>
    </ligand>
</feature>
<feature type="binding site" evidence="1">
    <location>
        <position position="258"/>
    </location>
    <ligand>
        <name>Zn(2+)</name>
        <dbReference type="ChEBI" id="CHEBI:29105"/>
    </ligand>
</feature>
<feature type="binding site" evidence="1">
    <location>
        <position position="324"/>
    </location>
    <ligand>
        <name>substrate</name>
    </ligand>
</feature>
<feature type="binding site" evidence="1">
    <location>
        <position position="357"/>
    </location>
    <ligand>
        <name>substrate</name>
    </ligand>
</feature>
<feature type="binding site" evidence="1">
    <location>
        <position position="357"/>
    </location>
    <ligand>
        <name>Zn(2+)</name>
        <dbReference type="ChEBI" id="CHEBI:29105"/>
    </ligand>
</feature>
<feature type="binding site" evidence="1">
    <location>
        <position position="411"/>
    </location>
    <ligand>
        <name>substrate</name>
    </ligand>
</feature>
<feature type="binding site" evidence="1">
    <location>
        <position position="416"/>
    </location>
    <ligand>
        <name>substrate</name>
    </ligand>
</feature>
<feature type="binding site" evidence="1">
    <location>
        <position position="416"/>
    </location>
    <ligand>
        <name>Zn(2+)</name>
        <dbReference type="ChEBI" id="CHEBI:29105"/>
    </ligand>
</feature>
<dbReference type="EC" id="1.1.1.23"/>
<dbReference type="EMBL" id="AE000657">
    <property type="protein sequence ID" value="AAC06931.1"/>
    <property type="molecule type" value="Genomic_DNA"/>
</dbReference>
<dbReference type="PIR" id="E70368">
    <property type="entry name" value="E70368"/>
</dbReference>
<dbReference type="RefSeq" id="NP_213537.1">
    <property type="nucleotide sequence ID" value="NC_000918.1"/>
</dbReference>
<dbReference type="RefSeq" id="WP_010880475.1">
    <property type="nucleotide sequence ID" value="NC_000918.1"/>
</dbReference>
<dbReference type="SMR" id="O66976"/>
<dbReference type="FunCoup" id="O66976">
    <property type="interactions" value="491"/>
</dbReference>
<dbReference type="STRING" id="224324.aq_782"/>
<dbReference type="EnsemblBacteria" id="AAC06931">
    <property type="protein sequence ID" value="AAC06931"/>
    <property type="gene ID" value="aq_782"/>
</dbReference>
<dbReference type="KEGG" id="aae:aq_782"/>
<dbReference type="PATRIC" id="fig|224324.8.peg.621"/>
<dbReference type="eggNOG" id="COG0141">
    <property type="taxonomic scope" value="Bacteria"/>
</dbReference>
<dbReference type="HOGENOM" id="CLU_006732_3_3_0"/>
<dbReference type="InParanoid" id="O66976"/>
<dbReference type="OrthoDB" id="9805269at2"/>
<dbReference type="UniPathway" id="UPA00031">
    <property type="reaction ID" value="UER00014"/>
</dbReference>
<dbReference type="Proteomes" id="UP000000798">
    <property type="component" value="Chromosome"/>
</dbReference>
<dbReference type="GO" id="GO:0005737">
    <property type="term" value="C:cytoplasm"/>
    <property type="evidence" value="ECO:0000318"/>
    <property type="project" value="GO_Central"/>
</dbReference>
<dbReference type="GO" id="GO:0005829">
    <property type="term" value="C:cytosol"/>
    <property type="evidence" value="ECO:0000318"/>
    <property type="project" value="GO_Central"/>
</dbReference>
<dbReference type="GO" id="GO:0004399">
    <property type="term" value="F:histidinol dehydrogenase activity"/>
    <property type="evidence" value="ECO:0000318"/>
    <property type="project" value="GO_Central"/>
</dbReference>
<dbReference type="GO" id="GO:0051287">
    <property type="term" value="F:NAD binding"/>
    <property type="evidence" value="ECO:0007669"/>
    <property type="project" value="InterPro"/>
</dbReference>
<dbReference type="GO" id="GO:0008270">
    <property type="term" value="F:zinc ion binding"/>
    <property type="evidence" value="ECO:0007669"/>
    <property type="project" value="UniProtKB-UniRule"/>
</dbReference>
<dbReference type="GO" id="GO:0000105">
    <property type="term" value="P:L-histidine biosynthetic process"/>
    <property type="evidence" value="ECO:0000318"/>
    <property type="project" value="GO_Central"/>
</dbReference>
<dbReference type="CDD" id="cd06572">
    <property type="entry name" value="Histidinol_dh"/>
    <property type="match status" value="1"/>
</dbReference>
<dbReference type="FunFam" id="3.40.50.1980:FF:000010">
    <property type="entry name" value="Histidinol dehydrogenase"/>
    <property type="match status" value="1"/>
</dbReference>
<dbReference type="FunFam" id="3.40.50.1980:FF:000026">
    <property type="entry name" value="Histidinol dehydrogenase"/>
    <property type="match status" value="1"/>
</dbReference>
<dbReference type="Gene3D" id="1.20.5.1300">
    <property type="match status" value="1"/>
</dbReference>
<dbReference type="Gene3D" id="3.40.50.1980">
    <property type="entry name" value="Nitrogenase molybdenum iron protein domain"/>
    <property type="match status" value="2"/>
</dbReference>
<dbReference type="HAMAP" id="MF_01024">
    <property type="entry name" value="HisD"/>
    <property type="match status" value="1"/>
</dbReference>
<dbReference type="InterPro" id="IPR016161">
    <property type="entry name" value="Ald_DH/histidinol_DH"/>
</dbReference>
<dbReference type="InterPro" id="IPR001692">
    <property type="entry name" value="Histidinol_DH_CS"/>
</dbReference>
<dbReference type="InterPro" id="IPR022695">
    <property type="entry name" value="Histidinol_DH_monofunct"/>
</dbReference>
<dbReference type="InterPro" id="IPR012131">
    <property type="entry name" value="Hstdl_DH"/>
</dbReference>
<dbReference type="NCBIfam" id="TIGR00069">
    <property type="entry name" value="hisD"/>
    <property type="match status" value="1"/>
</dbReference>
<dbReference type="PANTHER" id="PTHR21256:SF2">
    <property type="entry name" value="HISTIDINE BIOSYNTHESIS TRIFUNCTIONAL PROTEIN"/>
    <property type="match status" value="1"/>
</dbReference>
<dbReference type="PANTHER" id="PTHR21256">
    <property type="entry name" value="HISTIDINOL DEHYDROGENASE HDH"/>
    <property type="match status" value="1"/>
</dbReference>
<dbReference type="Pfam" id="PF00815">
    <property type="entry name" value="Histidinol_dh"/>
    <property type="match status" value="1"/>
</dbReference>
<dbReference type="PIRSF" id="PIRSF000099">
    <property type="entry name" value="Histidinol_dh"/>
    <property type="match status" value="1"/>
</dbReference>
<dbReference type="PRINTS" id="PR00083">
    <property type="entry name" value="HOLDHDRGNASE"/>
</dbReference>
<dbReference type="SUPFAM" id="SSF53720">
    <property type="entry name" value="ALDH-like"/>
    <property type="match status" value="1"/>
</dbReference>
<dbReference type="PROSITE" id="PS00611">
    <property type="entry name" value="HISOL_DEHYDROGENASE"/>
    <property type="match status" value="1"/>
</dbReference>
<accession>O66976</accession>
<comment type="function">
    <text evidence="1">Catalyzes the sequential NAD-dependent oxidations of L-histidinol to L-histidinaldehyde and then to L-histidine.</text>
</comment>
<comment type="catalytic activity">
    <reaction>
        <text>L-histidinol + 2 NAD(+) + H2O = L-histidine + 2 NADH + 3 H(+)</text>
        <dbReference type="Rhea" id="RHEA:20641"/>
        <dbReference type="ChEBI" id="CHEBI:15377"/>
        <dbReference type="ChEBI" id="CHEBI:15378"/>
        <dbReference type="ChEBI" id="CHEBI:57540"/>
        <dbReference type="ChEBI" id="CHEBI:57595"/>
        <dbReference type="ChEBI" id="CHEBI:57699"/>
        <dbReference type="ChEBI" id="CHEBI:57945"/>
        <dbReference type="EC" id="1.1.1.23"/>
    </reaction>
</comment>
<comment type="cofactor">
    <cofactor evidence="1">
        <name>Zn(2+)</name>
        <dbReference type="ChEBI" id="CHEBI:29105"/>
    </cofactor>
    <text evidence="1">Binds 1 zinc ion per subunit.</text>
</comment>
<comment type="pathway">
    <text>Amino-acid biosynthesis; L-histidine biosynthesis; L-histidine from 5-phospho-alpha-D-ribose 1-diphosphate: step 9/9.</text>
</comment>
<comment type="similarity">
    <text evidence="2">Belongs to the histidinol dehydrogenase family.</text>
</comment>
<protein>
    <recommendedName>
        <fullName>Histidinol dehydrogenase</fullName>
        <shortName>HDH</shortName>
        <ecNumber>1.1.1.23</ecNumber>
    </recommendedName>
</protein>